<comment type="function">
    <text evidence="1">Catalyzes the transfer of a methyl group from 5-methyltetrahydrofolate to homocysteine resulting in methionine formation.</text>
</comment>
<comment type="catalytic activity">
    <reaction evidence="1">
        <text>5-methyltetrahydropteroyltri-L-glutamate + L-homocysteine = tetrahydropteroyltri-L-glutamate + L-methionine</text>
        <dbReference type="Rhea" id="RHEA:21196"/>
        <dbReference type="ChEBI" id="CHEBI:57844"/>
        <dbReference type="ChEBI" id="CHEBI:58140"/>
        <dbReference type="ChEBI" id="CHEBI:58199"/>
        <dbReference type="ChEBI" id="CHEBI:58207"/>
        <dbReference type="EC" id="2.1.1.14"/>
    </reaction>
</comment>
<comment type="cofactor">
    <cofactor evidence="1">
        <name>Zn(2+)</name>
        <dbReference type="ChEBI" id="CHEBI:29105"/>
    </cofactor>
    <text evidence="1">Binds 1 zinc ion per subunit.</text>
</comment>
<comment type="pathway">
    <text evidence="1">Amino-acid biosynthesis; L-methionine biosynthesis via de novo pathway; L-methionine from L-homocysteine (MetE route): step 1/1.</text>
</comment>
<comment type="similarity">
    <text evidence="1 3">Belongs to the vitamin-B12 independent methionine synthase family.</text>
</comment>
<dbReference type="EC" id="2.1.1.14" evidence="1"/>
<dbReference type="EMBL" id="AE000516">
    <property type="protein sequence ID" value="AAK45422.1"/>
    <property type="molecule type" value="Genomic_DNA"/>
</dbReference>
<dbReference type="PIR" id="F70539">
    <property type="entry name" value="F70539"/>
</dbReference>
<dbReference type="RefSeq" id="WP_003405914.1">
    <property type="nucleotide sequence ID" value="NZ_KK341227.1"/>
</dbReference>
<dbReference type="SMR" id="P9WK06"/>
<dbReference type="KEGG" id="mtc:MT1165"/>
<dbReference type="PATRIC" id="fig|83331.31.peg.1260"/>
<dbReference type="HOGENOM" id="CLU_013175_0_0_11"/>
<dbReference type="UniPathway" id="UPA00051">
    <property type="reaction ID" value="UER00082"/>
</dbReference>
<dbReference type="Proteomes" id="UP000001020">
    <property type="component" value="Chromosome"/>
</dbReference>
<dbReference type="GO" id="GO:0003871">
    <property type="term" value="F:5-methyltetrahydropteroyltriglutamate-homocysteine S-methyltransferase activity"/>
    <property type="evidence" value="ECO:0007669"/>
    <property type="project" value="UniProtKB-UniRule"/>
</dbReference>
<dbReference type="GO" id="GO:0008270">
    <property type="term" value="F:zinc ion binding"/>
    <property type="evidence" value="ECO:0007669"/>
    <property type="project" value="InterPro"/>
</dbReference>
<dbReference type="GO" id="GO:0009086">
    <property type="term" value="P:methionine biosynthetic process"/>
    <property type="evidence" value="ECO:0007669"/>
    <property type="project" value="UniProtKB-UniRule"/>
</dbReference>
<dbReference type="GO" id="GO:0032259">
    <property type="term" value="P:methylation"/>
    <property type="evidence" value="ECO:0007669"/>
    <property type="project" value="UniProtKB-KW"/>
</dbReference>
<dbReference type="CDD" id="cd03311">
    <property type="entry name" value="CIMS_C_terminal_like"/>
    <property type="match status" value="1"/>
</dbReference>
<dbReference type="CDD" id="cd03312">
    <property type="entry name" value="CIMS_N_terminal_like"/>
    <property type="match status" value="1"/>
</dbReference>
<dbReference type="Gene3D" id="3.20.20.210">
    <property type="match status" value="2"/>
</dbReference>
<dbReference type="HAMAP" id="MF_00172">
    <property type="entry name" value="Meth_synth"/>
    <property type="match status" value="1"/>
</dbReference>
<dbReference type="InterPro" id="IPR013215">
    <property type="entry name" value="Cbl-indep_Met_Synth_N"/>
</dbReference>
<dbReference type="InterPro" id="IPR006276">
    <property type="entry name" value="Cobalamin-indep_Met_synthase"/>
</dbReference>
<dbReference type="InterPro" id="IPR002629">
    <property type="entry name" value="Met_Synth_C/arc"/>
</dbReference>
<dbReference type="InterPro" id="IPR038071">
    <property type="entry name" value="UROD/MetE-like_sf"/>
</dbReference>
<dbReference type="NCBIfam" id="TIGR01371">
    <property type="entry name" value="met_syn_B12ind"/>
    <property type="match status" value="1"/>
</dbReference>
<dbReference type="NCBIfam" id="NF003556">
    <property type="entry name" value="PRK05222.1"/>
    <property type="match status" value="1"/>
</dbReference>
<dbReference type="PANTHER" id="PTHR30519">
    <property type="entry name" value="5-METHYLTETRAHYDROPTEROYLTRIGLUTAMATE--HOMOCYSTEINE METHYLTRANSFERASE"/>
    <property type="match status" value="1"/>
</dbReference>
<dbReference type="Pfam" id="PF08267">
    <property type="entry name" value="Meth_synt_1"/>
    <property type="match status" value="1"/>
</dbReference>
<dbReference type="Pfam" id="PF01717">
    <property type="entry name" value="Meth_synt_2"/>
    <property type="match status" value="1"/>
</dbReference>
<dbReference type="PIRSF" id="PIRSF000382">
    <property type="entry name" value="MeTrfase_B12_ind"/>
    <property type="match status" value="1"/>
</dbReference>
<dbReference type="SUPFAM" id="SSF51726">
    <property type="entry name" value="UROD/MetE-like"/>
    <property type="match status" value="2"/>
</dbReference>
<protein>
    <recommendedName>
        <fullName evidence="1">5-methyltetrahydropteroyltriglutamate--homocysteine methyltransferase</fullName>
        <ecNumber evidence="1">2.1.1.14</ecNumber>
    </recommendedName>
    <alternativeName>
        <fullName evidence="1">Cobalamin-independent methionine synthase</fullName>
    </alternativeName>
    <alternativeName>
        <fullName evidence="1">Methionine synthase, vitamin-B12 independent isozyme</fullName>
    </alternativeName>
</protein>
<proteinExistence type="inferred from homology"/>
<gene>
    <name evidence="1" type="primary">metE</name>
    <name type="ordered locus">MT1165</name>
</gene>
<accession>P9WK06</accession>
<accession>L0T8S1</accession>
<accession>O06584</accession>
<accession>P65340</accession>
<sequence>MTQPVRRQPFTATITGSPRIGPRRELKRATEGYWAGRTSRSELEAVAATLRRDTWSALAAAGLDSVPVNTFSYYDQMLDTAVLLGALPPRVSPVSDGLDRYFAAARGTDQIAPLEMTKWFDTNYHYLVPEIGPSTTFTLHPGKVLAELKEALGQGIPARPVIIGPITFLLLSKAVDGAGAPIERLEELVPVYSELLSLLADGGAQWVQFDEPALVTDLSPDAPALAEAVYTALCSVSNRPAIYVATYFGDPGAALPALARTPVEAIGVDLVAGADTSVAGVPELAGKTLVAGVVDGRNVWRTDLEAALGTLATLLGSAATVAVSTSCSTLHVPYSLEPETDLDDALRSWLAFGAEKVREVVVLARALRDGHDAVADEIASSRAAIASRKRDPRLHNGQIRARIEAIVASGAHRGNAAQRRASQDARLHLPPLPTTTIGSYPQTSAIRVARAALRAGEIDEAEYVRRMRQEITEVIALQERLGLDVLVHGEPERNDMVQYFAEQLAGFFATQNGWVQSYGSRCVRPPILYGDVSRPRAMTVEWITYAQSLTDKPVKGMLTGPVTILAWSFVRDDQPLADTANQVALAIRDETVDLQSAGIAVIQVDEPALRELLPLRRADQAEYLRWAVGAFRLATSGVSDATQIHTHLCYSEFGEVIGAIADLDADVTSIEAARSHMEVLDDLNAIGFANGVGPGVYDIHSPRVPSAEEMADSLRAALRAVPAERLWVNPDCGLKTRNVDEVTASLHNMVAAAREVRAG</sequence>
<reference key="1">
    <citation type="journal article" date="2002" name="J. Bacteriol.">
        <title>Whole-genome comparison of Mycobacterium tuberculosis clinical and laboratory strains.</title>
        <authorList>
            <person name="Fleischmann R.D."/>
            <person name="Alland D."/>
            <person name="Eisen J.A."/>
            <person name="Carpenter L."/>
            <person name="White O."/>
            <person name="Peterson J.D."/>
            <person name="DeBoy R.T."/>
            <person name="Dodson R.J."/>
            <person name="Gwinn M.L."/>
            <person name="Haft D.H."/>
            <person name="Hickey E.K."/>
            <person name="Kolonay J.F."/>
            <person name="Nelson W.C."/>
            <person name="Umayam L.A."/>
            <person name="Ermolaeva M.D."/>
            <person name="Salzberg S.L."/>
            <person name="Delcher A."/>
            <person name="Utterback T.R."/>
            <person name="Weidman J.F."/>
            <person name="Khouri H.M."/>
            <person name="Gill J."/>
            <person name="Mikula A."/>
            <person name="Bishai W."/>
            <person name="Jacobs W.R. Jr."/>
            <person name="Venter J.C."/>
            <person name="Fraser C.M."/>
        </authorList>
    </citation>
    <scope>NUCLEOTIDE SEQUENCE [LARGE SCALE GENOMIC DNA]</scope>
    <source>
        <strain>CDC 1551 / Oshkosh</strain>
    </source>
</reference>
<organism>
    <name type="scientific">Mycobacterium tuberculosis (strain CDC 1551 / Oshkosh)</name>
    <dbReference type="NCBI Taxonomy" id="83331"/>
    <lineage>
        <taxon>Bacteria</taxon>
        <taxon>Bacillati</taxon>
        <taxon>Actinomycetota</taxon>
        <taxon>Actinomycetes</taxon>
        <taxon>Mycobacteriales</taxon>
        <taxon>Mycobacteriaceae</taxon>
        <taxon>Mycobacterium</taxon>
        <taxon>Mycobacterium tuberculosis complex</taxon>
    </lineage>
</organism>
<feature type="chain" id="PRO_0000427738" description="5-methyltetrahydropteroyltriglutamate--homocysteine methyltransferase">
    <location>
        <begin position="1"/>
        <end position="759"/>
    </location>
</feature>
<feature type="region of interest" description="Disordered" evidence="2">
    <location>
        <begin position="1"/>
        <end position="22"/>
    </location>
</feature>
<feature type="compositionally biased region" description="Polar residues" evidence="2">
    <location>
        <begin position="1"/>
        <end position="16"/>
    </location>
</feature>
<feature type="active site" description="Proton donor" evidence="1">
    <location>
        <position position="700"/>
    </location>
</feature>
<feature type="binding site" evidence="1">
    <location>
        <begin position="24"/>
        <end position="27"/>
    </location>
    <ligand>
        <name>5-methyltetrahydropteroyltri-L-glutamate</name>
        <dbReference type="ChEBI" id="CHEBI:58207"/>
    </ligand>
</feature>
<feature type="binding site" evidence="1">
    <location>
        <position position="118"/>
    </location>
    <ligand>
        <name>5-methyltetrahydropteroyltri-L-glutamate</name>
        <dbReference type="ChEBI" id="CHEBI:58207"/>
    </ligand>
</feature>
<feature type="binding site" evidence="1">
    <location>
        <begin position="437"/>
        <end position="439"/>
    </location>
    <ligand>
        <name>L-homocysteine</name>
        <dbReference type="ChEBI" id="CHEBI:58199"/>
    </ligand>
</feature>
<feature type="binding site" evidence="1">
    <location>
        <begin position="437"/>
        <end position="439"/>
    </location>
    <ligand>
        <name>L-methionine</name>
        <dbReference type="ChEBI" id="CHEBI:57844"/>
    </ligand>
</feature>
<feature type="binding site" evidence="1">
    <location>
        <position position="490"/>
    </location>
    <ligand>
        <name>L-homocysteine</name>
        <dbReference type="ChEBI" id="CHEBI:58199"/>
    </ligand>
</feature>
<feature type="binding site" evidence="1">
    <location>
        <position position="490"/>
    </location>
    <ligand>
        <name>L-methionine</name>
        <dbReference type="ChEBI" id="CHEBI:57844"/>
    </ligand>
</feature>
<feature type="binding site" evidence="1">
    <location>
        <begin position="521"/>
        <end position="522"/>
    </location>
    <ligand>
        <name>5-methyltetrahydropteroyltri-L-glutamate</name>
        <dbReference type="ChEBI" id="CHEBI:58207"/>
    </ligand>
</feature>
<feature type="binding site" evidence="1">
    <location>
        <position position="567"/>
    </location>
    <ligand>
        <name>5-methyltetrahydropteroyltri-L-glutamate</name>
        <dbReference type="ChEBI" id="CHEBI:58207"/>
    </ligand>
</feature>
<feature type="binding site" evidence="1">
    <location>
        <position position="605"/>
    </location>
    <ligand>
        <name>L-homocysteine</name>
        <dbReference type="ChEBI" id="CHEBI:58199"/>
    </ligand>
</feature>
<feature type="binding site" evidence="1">
    <location>
        <position position="605"/>
    </location>
    <ligand>
        <name>L-methionine</name>
        <dbReference type="ChEBI" id="CHEBI:57844"/>
    </ligand>
</feature>
<feature type="binding site" evidence="1">
    <location>
        <position position="611"/>
    </location>
    <ligand>
        <name>5-methyltetrahydropteroyltri-L-glutamate</name>
        <dbReference type="ChEBI" id="CHEBI:58207"/>
    </ligand>
</feature>
<feature type="binding site" evidence="1">
    <location>
        <position position="647"/>
    </location>
    <ligand>
        <name>Zn(2+)</name>
        <dbReference type="ChEBI" id="CHEBI:29105"/>
        <note>catalytic</note>
    </ligand>
</feature>
<feature type="binding site" evidence="1">
    <location>
        <position position="649"/>
    </location>
    <ligand>
        <name>Zn(2+)</name>
        <dbReference type="ChEBI" id="CHEBI:29105"/>
        <note>catalytic</note>
    </ligand>
</feature>
<feature type="binding site" evidence="1">
    <location>
        <position position="671"/>
    </location>
    <ligand>
        <name>Zn(2+)</name>
        <dbReference type="ChEBI" id="CHEBI:29105"/>
        <note>catalytic</note>
    </ligand>
</feature>
<feature type="binding site" evidence="1">
    <location>
        <position position="732"/>
    </location>
    <ligand>
        <name>Zn(2+)</name>
        <dbReference type="ChEBI" id="CHEBI:29105"/>
        <note>catalytic</note>
    </ligand>
</feature>
<name>METE_MYCTO</name>
<evidence type="ECO:0000255" key="1">
    <source>
        <dbReference type="HAMAP-Rule" id="MF_00172"/>
    </source>
</evidence>
<evidence type="ECO:0000256" key="2">
    <source>
        <dbReference type="SAM" id="MobiDB-lite"/>
    </source>
</evidence>
<evidence type="ECO:0000305" key="3"/>
<keyword id="KW-0028">Amino-acid biosynthesis</keyword>
<keyword id="KW-0479">Metal-binding</keyword>
<keyword id="KW-0486">Methionine biosynthesis</keyword>
<keyword id="KW-0489">Methyltransferase</keyword>
<keyword id="KW-1185">Reference proteome</keyword>
<keyword id="KW-0677">Repeat</keyword>
<keyword id="KW-0808">Transferase</keyword>
<keyword id="KW-0862">Zinc</keyword>